<sequence length="292" mass="31857">TFYDESCPDVSNIVRRVVQQALVSDERAGARLIRLHFHDCFVNGCDGSVLLEDQPGVVSELAAPGNANITGFNIVNNIKAAVEKACPGVVSCADILAIASVGSVNLAGGPCWEVQLGRRDSRRANLQGAIDGLPSPFENVTQLKRKFDRVDLDSTDLVALSGAHTFGKSRCQFFDRRLNVSNPDSTLNPRYAQQLRQACSSGRDTFVNLDPTTPNKFDKNYYTNLQSNTGPLTSDQVLHSTPGEDTVKIVNLFAASQNQFFESFGQSMINMGNIQPLTGNQGEIRSNCRRLN</sequence>
<keyword id="KW-0106">Calcium</keyword>
<keyword id="KW-1015">Disulfide bond</keyword>
<keyword id="KW-0325">Glycoprotein</keyword>
<keyword id="KW-0349">Heme</keyword>
<keyword id="KW-0376">Hydrogen peroxide</keyword>
<keyword id="KW-0408">Iron</keyword>
<keyword id="KW-0479">Metal-binding</keyword>
<keyword id="KW-0560">Oxidoreductase</keyword>
<keyword id="KW-0575">Peroxidase</keyword>
<proteinExistence type="evidence at transcript level"/>
<protein>
    <recommendedName>
        <fullName>Peroxidase 2</fullName>
        <ecNumber>1.11.1.7</ecNumber>
    </recommendedName>
    <alternativeName>
        <fullName>CUP2</fullName>
    </alternativeName>
</protein>
<comment type="function">
    <text>Removal of H(2)O(2), oxidation of toxic reductants, biosynthesis and degradation of lignin, suberization, auxin catabolism, response to environmental stresses such as wounding, pathogen attack and oxidative stress. These functions might be dependent on each isozyme/isoform in each plant tissue.</text>
</comment>
<comment type="catalytic activity">
    <reaction>
        <text>2 a phenolic donor + H2O2 = 2 a phenolic radical donor + 2 H2O</text>
        <dbReference type="Rhea" id="RHEA:56136"/>
        <dbReference type="ChEBI" id="CHEBI:15377"/>
        <dbReference type="ChEBI" id="CHEBI:16240"/>
        <dbReference type="ChEBI" id="CHEBI:139520"/>
        <dbReference type="ChEBI" id="CHEBI:139521"/>
        <dbReference type="EC" id="1.11.1.7"/>
    </reaction>
</comment>
<comment type="cofactor">
    <cofactor>
        <name>Ca(2+)</name>
        <dbReference type="ChEBI" id="CHEBI:29108"/>
    </cofactor>
    <text>Binds 2 calcium ions per subunit.</text>
</comment>
<comment type="cofactor">
    <cofactor>
        <name>heme b</name>
        <dbReference type="ChEBI" id="CHEBI:60344"/>
    </cofactor>
    <text>Binds 1 heme b (iron(II)-protoporphyrin IX) group per subunit.</text>
</comment>
<comment type="similarity">
    <text evidence="2">Belongs to the peroxidase family. Classical plant (class III) peroxidase subfamily.</text>
</comment>
<feature type="chain" id="PRO_0000055610" description="Peroxidase 2">
    <location>
        <begin position="1" status="less than"/>
        <end position="292"/>
    </location>
</feature>
<feature type="active site" description="Proton acceptor" evidence="2 3">
    <location>
        <position position="38"/>
    </location>
</feature>
<feature type="binding site" evidence="2">
    <location>
        <position position="39"/>
    </location>
    <ligand>
        <name>Ca(2+)</name>
        <dbReference type="ChEBI" id="CHEBI:29108"/>
        <label>1</label>
    </ligand>
</feature>
<feature type="binding site" evidence="2">
    <location>
        <position position="42"/>
    </location>
    <ligand>
        <name>Ca(2+)</name>
        <dbReference type="ChEBI" id="CHEBI:29108"/>
        <label>1</label>
    </ligand>
</feature>
<feature type="binding site" evidence="2">
    <location>
        <position position="44"/>
    </location>
    <ligand>
        <name>Ca(2+)</name>
        <dbReference type="ChEBI" id="CHEBI:29108"/>
        <label>1</label>
    </ligand>
</feature>
<feature type="binding site" evidence="2">
    <location>
        <position position="46"/>
    </location>
    <ligand>
        <name>Ca(2+)</name>
        <dbReference type="ChEBI" id="CHEBI:29108"/>
        <label>1</label>
    </ligand>
</feature>
<feature type="binding site" evidence="2">
    <location>
        <position position="48"/>
    </location>
    <ligand>
        <name>Ca(2+)</name>
        <dbReference type="ChEBI" id="CHEBI:29108"/>
        <label>1</label>
    </ligand>
</feature>
<feature type="binding site" evidence="2">
    <location>
        <position position="134"/>
    </location>
    <ligand>
        <name>substrate</name>
    </ligand>
</feature>
<feature type="binding site" description="axial binding residue" evidence="2">
    <location>
        <position position="164"/>
    </location>
    <ligand>
        <name>heme b</name>
        <dbReference type="ChEBI" id="CHEBI:60344"/>
    </ligand>
    <ligandPart>
        <name>Fe</name>
        <dbReference type="ChEBI" id="CHEBI:18248"/>
    </ligandPart>
</feature>
<feature type="binding site" evidence="2">
    <location>
        <position position="165"/>
    </location>
    <ligand>
        <name>Ca(2+)</name>
        <dbReference type="ChEBI" id="CHEBI:29108"/>
        <label>2</label>
    </ligand>
</feature>
<feature type="binding site" evidence="2">
    <location>
        <position position="210"/>
    </location>
    <ligand>
        <name>Ca(2+)</name>
        <dbReference type="ChEBI" id="CHEBI:29108"/>
        <label>2</label>
    </ligand>
</feature>
<feature type="binding site" evidence="2">
    <location>
        <position position="213"/>
    </location>
    <ligand>
        <name>Ca(2+)</name>
        <dbReference type="ChEBI" id="CHEBI:29108"/>
        <label>2</label>
    </ligand>
</feature>
<feature type="binding site" evidence="2">
    <location>
        <position position="218"/>
    </location>
    <ligand>
        <name>Ca(2+)</name>
        <dbReference type="ChEBI" id="CHEBI:29108"/>
        <label>2</label>
    </ligand>
</feature>
<feature type="site" description="Transition state stabilizer" evidence="2">
    <location>
        <position position="34"/>
    </location>
</feature>
<feature type="glycosylation site" description="N-linked (GlcNAc...) asparagine" evidence="1">
    <location>
        <position position="68"/>
    </location>
</feature>
<feature type="glycosylation site" description="N-linked (GlcNAc...) asparagine" evidence="1">
    <location>
        <position position="139"/>
    </location>
</feature>
<feature type="glycosylation site" description="N-linked (GlcNAc...) asparagine" evidence="1">
    <location>
        <position position="179"/>
    </location>
</feature>
<feature type="disulfide bond" evidence="2">
    <location>
        <begin position="7"/>
        <end position="86"/>
    </location>
</feature>
<feature type="disulfide bond" evidence="2">
    <location>
        <begin position="40"/>
        <end position="45"/>
    </location>
</feature>
<feature type="disulfide bond" evidence="2">
    <location>
        <begin position="92"/>
        <end position="288"/>
    </location>
</feature>
<feature type="disulfide bond" evidence="2">
    <location>
        <begin position="171"/>
        <end position="199"/>
    </location>
</feature>
<feature type="non-terminal residue">
    <location>
        <position position="1"/>
    </location>
</feature>
<accession>P19135</accession>
<organism>
    <name type="scientific">Cucumis sativus</name>
    <name type="common">Cucumber</name>
    <dbReference type="NCBI Taxonomy" id="3659"/>
    <lineage>
        <taxon>Eukaryota</taxon>
        <taxon>Viridiplantae</taxon>
        <taxon>Streptophyta</taxon>
        <taxon>Embryophyta</taxon>
        <taxon>Tracheophyta</taxon>
        <taxon>Spermatophyta</taxon>
        <taxon>Magnoliopsida</taxon>
        <taxon>eudicotyledons</taxon>
        <taxon>Gunneridae</taxon>
        <taxon>Pentapetalae</taxon>
        <taxon>rosids</taxon>
        <taxon>fabids</taxon>
        <taxon>Cucurbitales</taxon>
        <taxon>Cucurbitaceae</taxon>
        <taxon>Benincaseae</taxon>
        <taxon>Cucumis</taxon>
    </lineage>
</organism>
<dbReference type="EC" id="1.11.1.7"/>
<dbReference type="EMBL" id="M32742">
    <property type="protein sequence ID" value="AAA33121.1"/>
    <property type="molecule type" value="mRNA"/>
</dbReference>
<dbReference type="PIR" id="S11870">
    <property type="entry name" value="S11870"/>
</dbReference>
<dbReference type="SMR" id="P19135"/>
<dbReference type="PeroxiBase" id="23">
    <property type="entry name" value="CsaPrx07"/>
</dbReference>
<dbReference type="eggNOG" id="ENOG502QVXS">
    <property type="taxonomic scope" value="Eukaryota"/>
</dbReference>
<dbReference type="SABIO-RK" id="P19135"/>
<dbReference type="GO" id="GO:0020037">
    <property type="term" value="F:heme binding"/>
    <property type="evidence" value="ECO:0007669"/>
    <property type="project" value="InterPro"/>
</dbReference>
<dbReference type="GO" id="GO:0140825">
    <property type="term" value="F:lactoperoxidase activity"/>
    <property type="evidence" value="ECO:0007669"/>
    <property type="project" value="UniProtKB-EC"/>
</dbReference>
<dbReference type="GO" id="GO:0046872">
    <property type="term" value="F:metal ion binding"/>
    <property type="evidence" value="ECO:0007669"/>
    <property type="project" value="UniProtKB-KW"/>
</dbReference>
<dbReference type="GO" id="GO:0042744">
    <property type="term" value="P:hydrogen peroxide catabolic process"/>
    <property type="evidence" value="ECO:0007669"/>
    <property type="project" value="UniProtKB-KW"/>
</dbReference>
<dbReference type="GO" id="GO:0006979">
    <property type="term" value="P:response to oxidative stress"/>
    <property type="evidence" value="ECO:0007669"/>
    <property type="project" value="InterPro"/>
</dbReference>
<dbReference type="CDD" id="cd00693">
    <property type="entry name" value="secretory_peroxidase"/>
    <property type="match status" value="1"/>
</dbReference>
<dbReference type="FunFam" id="1.10.420.10:FF:000001">
    <property type="entry name" value="Peroxidase"/>
    <property type="match status" value="1"/>
</dbReference>
<dbReference type="FunFam" id="1.10.520.10:FF:000009">
    <property type="entry name" value="Peroxidase"/>
    <property type="match status" value="1"/>
</dbReference>
<dbReference type="Gene3D" id="1.10.520.10">
    <property type="match status" value="1"/>
</dbReference>
<dbReference type="Gene3D" id="1.10.420.10">
    <property type="entry name" value="Peroxidase, domain 2"/>
    <property type="match status" value="1"/>
</dbReference>
<dbReference type="InterPro" id="IPR002016">
    <property type="entry name" value="Haem_peroxidase"/>
</dbReference>
<dbReference type="InterPro" id="IPR010255">
    <property type="entry name" value="Haem_peroxidase_sf"/>
</dbReference>
<dbReference type="InterPro" id="IPR000823">
    <property type="entry name" value="Peroxidase_pln"/>
</dbReference>
<dbReference type="InterPro" id="IPR019794">
    <property type="entry name" value="Peroxidases_AS"/>
</dbReference>
<dbReference type="InterPro" id="IPR019793">
    <property type="entry name" value="Peroxidases_heam-ligand_BS"/>
</dbReference>
<dbReference type="InterPro" id="IPR033905">
    <property type="entry name" value="Secretory_peroxidase"/>
</dbReference>
<dbReference type="PANTHER" id="PTHR31388:SF147">
    <property type="entry name" value="PEROXIDASE 58"/>
    <property type="match status" value="1"/>
</dbReference>
<dbReference type="PANTHER" id="PTHR31388">
    <property type="entry name" value="PEROXIDASE 72-RELATED"/>
    <property type="match status" value="1"/>
</dbReference>
<dbReference type="Pfam" id="PF00141">
    <property type="entry name" value="peroxidase"/>
    <property type="match status" value="1"/>
</dbReference>
<dbReference type="PRINTS" id="PR00458">
    <property type="entry name" value="PEROXIDASE"/>
</dbReference>
<dbReference type="PRINTS" id="PR00461">
    <property type="entry name" value="PLPEROXIDASE"/>
</dbReference>
<dbReference type="SUPFAM" id="SSF48113">
    <property type="entry name" value="Heme-dependent peroxidases"/>
    <property type="match status" value="1"/>
</dbReference>
<dbReference type="PROSITE" id="PS00435">
    <property type="entry name" value="PEROXIDASE_1"/>
    <property type="match status" value="1"/>
</dbReference>
<dbReference type="PROSITE" id="PS00436">
    <property type="entry name" value="PEROXIDASE_2"/>
    <property type="match status" value="1"/>
</dbReference>
<dbReference type="PROSITE" id="PS50873">
    <property type="entry name" value="PEROXIDASE_4"/>
    <property type="match status" value="1"/>
</dbReference>
<reference key="1">
    <citation type="journal article" date="1990" name="Plant Mol. Biol.">
        <title>Isolation and sequencing of cDNA clones encoding ethylene-induced putative peroxidases from cucumber cotyledons.</title>
        <authorList>
            <person name="Morgens P.H."/>
            <person name="Callahan A.M."/>
            <person name="Dunn L.J."/>
            <person name="Abeles F.B."/>
        </authorList>
    </citation>
    <scope>NUCLEOTIDE SEQUENCE [MRNA]</scope>
</reference>
<evidence type="ECO:0000255" key="1"/>
<evidence type="ECO:0000255" key="2">
    <source>
        <dbReference type="PROSITE-ProRule" id="PRU00297"/>
    </source>
</evidence>
<evidence type="ECO:0000255" key="3">
    <source>
        <dbReference type="PROSITE-ProRule" id="PRU10012"/>
    </source>
</evidence>
<name>PER2_CUCSA</name>